<evidence type="ECO:0000255" key="1">
    <source>
        <dbReference type="HAMAP-Rule" id="MF_01152"/>
    </source>
</evidence>
<evidence type="ECO:0000256" key="2">
    <source>
        <dbReference type="SAM" id="MobiDB-lite"/>
    </source>
</evidence>
<gene>
    <name evidence="1" type="primary">dnaJ2</name>
    <name type="ordered locus">PPA2038</name>
</gene>
<sequence length="380" mass="40572">MSTKDWAEKDYYKILGVSKDAKPEEIKKAFRKIARDNHPDSHPGDKAAEARFKEASEANDVLSNAKKRKEYDQARSLFGSAGGFRFPRGGAQTSVNVEDFLRTASNGDGFGDLFGNLFGASGGRRTASRSPRRGADVEGETTISFDDAVSGTTVTMDMVSQAPCQACRGTGARAGTVPRVCSTCQGSGMHASSAGGVFEMTEPCPDCHGRGMIVEDPCQVCHGSGRAKSTKSMQTRIPAGVEDGQRIRIKGKGSPGENGGKAGDLYVKVTVRPHEIFGRDGHNLTVTVPVTFPEATLGAEVEVPTLAGTTVRLRIPAGTPNGRTFRVRGRGVPRSDGSRGDLLATVEIAVPESLDDDARHVVERLRDSLPQATPRPWEVK</sequence>
<keyword id="KW-0143">Chaperone</keyword>
<keyword id="KW-0963">Cytoplasm</keyword>
<keyword id="KW-0235">DNA replication</keyword>
<keyword id="KW-0479">Metal-binding</keyword>
<keyword id="KW-0677">Repeat</keyword>
<keyword id="KW-0346">Stress response</keyword>
<keyword id="KW-0862">Zinc</keyword>
<keyword id="KW-0863">Zinc-finger</keyword>
<accession>Q6A662</accession>
<protein>
    <recommendedName>
        <fullName evidence="1">Chaperone protein DnaJ 2</fullName>
    </recommendedName>
</protein>
<organism>
    <name type="scientific">Cutibacterium acnes (strain DSM 16379 / KPA171202)</name>
    <name type="common">Propionibacterium acnes</name>
    <dbReference type="NCBI Taxonomy" id="267747"/>
    <lineage>
        <taxon>Bacteria</taxon>
        <taxon>Bacillati</taxon>
        <taxon>Actinomycetota</taxon>
        <taxon>Actinomycetes</taxon>
        <taxon>Propionibacteriales</taxon>
        <taxon>Propionibacteriaceae</taxon>
        <taxon>Cutibacterium</taxon>
    </lineage>
</organism>
<reference key="1">
    <citation type="journal article" date="2004" name="Science">
        <title>The complete genome sequence of Propionibacterium acnes, a commensal of human skin.</title>
        <authorList>
            <person name="Brueggemann H."/>
            <person name="Henne A."/>
            <person name="Hoster F."/>
            <person name="Liesegang H."/>
            <person name="Wiezer A."/>
            <person name="Strittmatter A."/>
            <person name="Hujer S."/>
            <person name="Duerre P."/>
            <person name="Gottschalk G."/>
        </authorList>
    </citation>
    <scope>NUCLEOTIDE SEQUENCE [LARGE SCALE GENOMIC DNA]</scope>
    <source>
        <strain>DSM 16379 / KPA171202</strain>
    </source>
</reference>
<comment type="function">
    <text evidence="1">Participates actively in the response to hyperosmotic and heat shock by preventing the aggregation of stress-denatured proteins and by disaggregating proteins, also in an autonomous, DnaK-independent fashion. Unfolded proteins bind initially to DnaJ; upon interaction with the DnaJ-bound protein, DnaK hydrolyzes its bound ATP, resulting in the formation of a stable complex. GrpE releases ADP from DnaK; ATP binding to DnaK triggers the release of the substrate protein, thus completing the reaction cycle. Several rounds of ATP-dependent interactions between DnaJ, DnaK and GrpE are required for fully efficient folding. Also involved, together with DnaK and GrpE, in the DNA replication of plasmids through activation of initiation proteins.</text>
</comment>
<comment type="cofactor">
    <cofactor evidence="1">
        <name>Zn(2+)</name>
        <dbReference type="ChEBI" id="CHEBI:29105"/>
    </cofactor>
    <text evidence="1">Binds 2 Zn(2+) ions per monomer.</text>
</comment>
<comment type="subunit">
    <text evidence="1">Homodimer.</text>
</comment>
<comment type="subcellular location">
    <subcellularLocation>
        <location evidence="1">Cytoplasm</location>
    </subcellularLocation>
</comment>
<comment type="domain">
    <text evidence="1">The J domain is necessary and sufficient to stimulate DnaK ATPase activity. Zinc center 1 plays an important role in the autonomous, DnaK-independent chaperone activity of DnaJ. Zinc center 2 is essential for interaction with DnaK and for DnaJ activity.</text>
</comment>
<comment type="similarity">
    <text evidence="1">Belongs to the DnaJ family.</text>
</comment>
<dbReference type="EMBL" id="AE017283">
    <property type="protein sequence ID" value="AAT83751.1"/>
    <property type="molecule type" value="Genomic_DNA"/>
</dbReference>
<dbReference type="SMR" id="Q6A662"/>
<dbReference type="EnsemblBacteria" id="AAT83751">
    <property type="protein sequence ID" value="AAT83751"/>
    <property type="gene ID" value="PPA2038"/>
</dbReference>
<dbReference type="KEGG" id="pac:PPA2038"/>
<dbReference type="PATRIC" id="fig|267747.3.peg.2087"/>
<dbReference type="eggNOG" id="COG0484">
    <property type="taxonomic scope" value="Bacteria"/>
</dbReference>
<dbReference type="HOGENOM" id="CLU_017633_0_6_11"/>
<dbReference type="Proteomes" id="UP000000603">
    <property type="component" value="Chromosome"/>
</dbReference>
<dbReference type="GO" id="GO:0005737">
    <property type="term" value="C:cytoplasm"/>
    <property type="evidence" value="ECO:0007669"/>
    <property type="project" value="UniProtKB-SubCell"/>
</dbReference>
<dbReference type="GO" id="GO:0005524">
    <property type="term" value="F:ATP binding"/>
    <property type="evidence" value="ECO:0007669"/>
    <property type="project" value="InterPro"/>
</dbReference>
<dbReference type="GO" id="GO:0031072">
    <property type="term" value="F:heat shock protein binding"/>
    <property type="evidence" value="ECO:0007669"/>
    <property type="project" value="InterPro"/>
</dbReference>
<dbReference type="GO" id="GO:0051082">
    <property type="term" value="F:unfolded protein binding"/>
    <property type="evidence" value="ECO:0007669"/>
    <property type="project" value="UniProtKB-UniRule"/>
</dbReference>
<dbReference type="GO" id="GO:0008270">
    <property type="term" value="F:zinc ion binding"/>
    <property type="evidence" value="ECO:0007669"/>
    <property type="project" value="UniProtKB-UniRule"/>
</dbReference>
<dbReference type="GO" id="GO:0051085">
    <property type="term" value="P:chaperone cofactor-dependent protein refolding"/>
    <property type="evidence" value="ECO:0007669"/>
    <property type="project" value="TreeGrafter"/>
</dbReference>
<dbReference type="GO" id="GO:0006260">
    <property type="term" value="P:DNA replication"/>
    <property type="evidence" value="ECO:0007669"/>
    <property type="project" value="UniProtKB-KW"/>
</dbReference>
<dbReference type="GO" id="GO:0042026">
    <property type="term" value="P:protein refolding"/>
    <property type="evidence" value="ECO:0007669"/>
    <property type="project" value="TreeGrafter"/>
</dbReference>
<dbReference type="GO" id="GO:0009408">
    <property type="term" value="P:response to heat"/>
    <property type="evidence" value="ECO:0007669"/>
    <property type="project" value="InterPro"/>
</dbReference>
<dbReference type="CDD" id="cd06257">
    <property type="entry name" value="DnaJ"/>
    <property type="match status" value="1"/>
</dbReference>
<dbReference type="CDD" id="cd10747">
    <property type="entry name" value="DnaJ_C"/>
    <property type="match status" value="1"/>
</dbReference>
<dbReference type="CDD" id="cd10719">
    <property type="entry name" value="DnaJ_zf"/>
    <property type="match status" value="1"/>
</dbReference>
<dbReference type="FunFam" id="2.60.260.20:FF:000013">
    <property type="entry name" value="DnaJ subfamily B member 11"/>
    <property type="match status" value="1"/>
</dbReference>
<dbReference type="FunFam" id="2.10.230.10:FF:000002">
    <property type="entry name" value="Molecular chaperone DnaJ"/>
    <property type="match status" value="1"/>
</dbReference>
<dbReference type="Gene3D" id="1.10.287.110">
    <property type="entry name" value="DnaJ domain"/>
    <property type="match status" value="1"/>
</dbReference>
<dbReference type="Gene3D" id="2.10.230.10">
    <property type="entry name" value="Heat shock protein DnaJ, cysteine-rich domain"/>
    <property type="match status" value="1"/>
</dbReference>
<dbReference type="Gene3D" id="2.60.260.20">
    <property type="entry name" value="Urease metallochaperone UreE, N-terminal domain"/>
    <property type="match status" value="2"/>
</dbReference>
<dbReference type="HAMAP" id="MF_01152">
    <property type="entry name" value="DnaJ"/>
    <property type="match status" value="1"/>
</dbReference>
<dbReference type="InterPro" id="IPR012724">
    <property type="entry name" value="DnaJ"/>
</dbReference>
<dbReference type="InterPro" id="IPR002939">
    <property type="entry name" value="DnaJ_C"/>
</dbReference>
<dbReference type="InterPro" id="IPR001623">
    <property type="entry name" value="DnaJ_domain"/>
</dbReference>
<dbReference type="InterPro" id="IPR018253">
    <property type="entry name" value="DnaJ_domain_CS"/>
</dbReference>
<dbReference type="InterPro" id="IPR008971">
    <property type="entry name" value="HSP40/DnaJ_pept-bd"/>
</dbReference>
<dbReference type="InterPro" id="IPR001305">
    <property type="entry name" value="HSP_DnaJ_Cys-rich_dom"/>
</dbReference>
<dbReference type="InterPro" id="IPR036410">
    <property type="entry name" value="HSP_DnaJ_Cys-rich_dom_sf"/>
</dbReference>
<dbReference type="InterPro" id="IPR036869">
    <property type="entry name" value="J_dom_sf"/>
</dbReference>
<dbReference type="NCBIfam" id="TIGR02349">
    <property type="entry name" value="DnaJ_bact"/>
    <property type="match status" value="1"/>
</dbReference>
<dbReference type="NCBIfam" id="NF008035">
    <property type="entry name" value="PRK10767.1"/>
    <property type="match status" value="1"/>
</dbReference>
<dbReference type="PANTHER" id="PTHR43096:SF54">
    <property type="entry name" value="CHAPERONE PROTEIN DNAJ 1"/>
    <property type="match status" value="1"/>
</dbReference>
<dbReference type="PANTHER" id="PTHR43096">
    <property type="entry name" value="DNAJ HOMOLOG 1, MITOCHONDRIAL-RELATED"/>
    <property type="match status" value="1"/>
</dbReference>
<dbReference type="Pfam" id="PF00226">
    <property type="entry name" value="DnaJ"/>
    <property type="match status" value="1"/>
</dbReference>
<dbReference type="Pfam" id="PF01556">
    <property type="entry name" value="DnaJ_C"/>
    <property type="match status" value="1"/>
</dbReference>
<dbReference type="Pfam" id="PF00684">
    <property type="entry name" value="DnaJ_CXXCXGXG"/>
    <property type="match status" value="1"/>
</dbReference>
<dbReference type="PRINTS" id="PR00625">
    <property type="entry name" value="JDOMAIN"/>
</dbReference>
<dbReference type="SMART" id="SM00271">
    <property type="entry name" value="DnaJ"/>
    <property type="match status" value="1"/>
</dbReference>
<dbReference type="SUPFAM" id="SSF46565">
    <property type="entry name" value="Chaperone J-domain"/>
    <property type="match status" value="1"/>
</dbReference>
<dbReference type="SUPFAM" id="SSF57938">
    <property type="entry name" value="DnaJ/Hsp40 cysteine-rich domain"/>
    <property type="match status" value="1"/>
</dbReference>
<dbReference type="SUPFAM" id="SSF49493">
    <property type="entry name" value="HSP40/DnaJ peptide-binding domain"/>
    <property type="match status" value="2"/>
</dbReference>
<dbReference type="PROSITE" id="PS00636">
    <property type="entry name" value="DNAJ_1"/>
    <property type="match status" value="1"/>
</dbReference>
<dbReference type="PROSITE" id="PS50076">
    <property type="entry name" value="DNAJ_2"/>
    <property type="match status" value="1"/>
</dbReference>
<dbReference type="PROSITE" id="PS51188">
    <property type="entry name" value="ZF_CR"/>
    <property type="match status" value="1"/>
</dbReference>
<name>DNAJ2_CUTAK</name>
<proteinExistence type="inferred from homology"/>
<feature type="chain" id="PRO_0000070854" description="Chaperone protein DnaJ 2">
    <location>
        <begin position="1"/>
        <end position="380"/>
    </location>
</feature>
<feature type="domain" description="J" evidence="1">
    <location>
        <begin position="10"/>
        <end position="75"/>
    </location>
</feature>
<feature type="repeat" description="CXXCXGXG motif">
    <location>
        <begin position="164"/>
        <end position="171"/>
    </location>
</feature>
<feature type="repeat" description="CXXCXGXG motif">
    <location>
        <begin position="181"/>
        <end position="188"/>
    </location>
</feature>
<feature type="repeat" description="CXXCXGXG motif">
    <location>
        <begin position="204"/>
        <end position="211"/>
    </location>
</feature>
<feature type="repeat" description="CXXCXGXG motif">
    <location>
        <begin position="218"/>
        <end position="225"/>
    </location>
</feature>
<feature type="zinc finger region" description="CR-type" evidence="1">
    <location>
        <begin position="151"/>
        <end position="230"/>
    </location>
</feature>
<feature type="region of interest" description="Disordered" evidence="2">
    <location>
        <begin position="32"/>
        <end position="63"/>
    </location>
</feature>
<feature type="compositionally biased region" description="Basic and acidic residues" evidence="2">
    <location>
        <begin position="32"/>
        <end position="56"/>
    </location>
</feature>
<feature type="binding site" evidence="1">
    <location>
        <position position="164"/>
    </location>
    <ligand>
        <name>Zn(2+)</name>
        <dbReference type="ChEBI" id="CHEBI:29105"/>
        <label>1</label>
    </ligand>
</feature>
<feature type="binding site" evidence="1">
    <location>
        <position position="167"/>
    </location>
    <ligand>
        <name>Zn(2+)</name>
        <dbReference type="ChEBI" id="CHEBI:29105"/>
        <label>1</label>
    </ligand>
</feature>
<feature type="binding site" evidence="1">
    <location>
        <position position="181"/>
    </location>
    <ligand>
        <name>Zn(2+)</name>
        <dbReference type="ChEBI" id="CHEBI:29105"/>
        <label>2</label>
    </ligand>
</feature>
<feature type="binding site" evidence="1">
    <location>
        <position position="184"/>
    </location>
    <ligand>
        <name>Zn(2+)</name>
        <dbReference type="ChEBI" id="CHEBI:29105"/>
        <label>2</label>
    </ligand>
</feature>
<feature type="binding site" evidence="1">
    <location>
        <position position="204"/>
    </location>
    <ligand>
        <name>Zn(2+)</name>
        <dbReference type="ChEBI" id="CHEBI:29105"/>
        <label>2</label>
    </ligand>
</feature>
<feature type="binding site" evidence="1">
    <location>
        <position position="207"/>
    </location>
    <ligand>
        <name>Zn(2+)</name>
        <dbReference type="ChEBI" id="CHEBI:29105"/>
        <label>2</label>
    </ligand>
</feature>
<feature type="binding site" evidence="1">
    <location>
        <position position="218"/>
    </location>
    <ligand>
        <name>Zn(2+)</name>
        <dbReference type="ChEBI" id="CHEBI:29105"/>
        <label>1</label>
    </ligand>
</feature>
<feature type="binding site" evidence="1">
    <location>
        <position position="221"/>
    </location>
    <ligand>
        <name>Zn(2+)</name>
        <dbReference type="ChEBI" id="CHEBI:29105"/>
        <label>1</label>
    </ligand>
</feature>